<name>PYRE_STAAW</name>
<feature type="chain" id="PRO_0000110741" description="Orotate phosphoribosyltransferase">
    <location>
        <begin position="1"/>
        <end position="203"/>
    </location>
</feature>
<feature type="binding site" evidence="1">
    <location>
        <position position="94"/>
    </location>
    <ligand>
        <name>5-phospho-alpha-D-ribose 1-diphosphate</name>
        <dbReference type="ChEBI" id="CHEBI:58017"/>
        <note>ligand shared between dimeric partners</note>
    </ligand>
</feature>
<feature type="binding site" evidence="1">
    <location>
        <position position="98"/>
    </location>
    <ligand>
        <name>5-phospho-alpha-D-ribose 1-diphosphate</name>
        <dbReference type="ChEBI" id="CHEBI:58017"/>
        <note>ligand shared between dimeric partners</note>
    </ligand>
</feature>
<feature type="binding site" evidence="1">
    <location>
        <position position="100"/>
    </location>
    <ligand>
        <name>5-phospho-alpha-D-ribose 1-diphosphate</name>
        <dbReference type="ChEBI" id="CHEBI:58017"/>
        <note>ligand shared between dimeric partners</note>
    </ligand>
</feature>
<feature type="binding site" description="in other chain" evidence="1">
    <location>
        <begin position="120"/>
        <end position="128"/>
    </location>
    <ligand>
        <name>5-phospho-alpha-D-ribose 1-diphosphate</name>
        <dbReference type="ChEBI" id="CHEBI:58017"/>
        <note>ligand shared between dimeric partners</note>
    </ligand>
</feature>
<feature type="binding site" evidence="1">
    <location>
        <position position="124"/>
    </location>
    <ligand>
        <name>orotate</name>
        <dbReference type="ChEBI" id="CHEBI:30839"/>
    </ligand>
</feature>
<gene>
    <name evidence="1" type="primary">pyrE</name>
    <name type="ordered locus">MW1088</name>
</gene>
<reference key="1">
    <citation type="journal article" date="2002" name="Lancet">
        <title>Genome and virulence determinants of high virulence community-acquired MRSA.</title>
        <authorList>
            <person name="Baba T."/>
            <person name="Takeuchi F."/>
            <person name="Kuroda M."/>
            <person name="Yuzawa H."/>
            <person name="Aoki K."/>
            <person name="Oguchi A."/>
            <person name="Nagai Y."/>
            <person name="Iwama N."/>
            <person name="Asano K."/>
            <person name="Naimi T."/>
            <person name="Kuroda H."/>
            <person name="Cui L."/>
            <person name="Yamamoto K."/>
            <person name="Hiramatsu K."/>
        </authorList>
    </citation>
    <scope>NUCLEOTIDE SEQUENCE [LARGE SCALE GENOMIC DNA]</scope>
    <source>
        <strain>MW2</strain>
    </source>
</reference>
<sequence>MAKEIAKSLLDIEAVTLSPNDLYTWSSGIKSPIYCDNRVTLGYPLVRGAIRDGLINLIKEHFPEVEVISGTATAGIPHAAFIAEKLKLPMNYVRSSNKSHGKQNQIEGAKSEGKKVVVIEDLISTGGSSVTAVEALKLAGAEVLGVVAIFTYGLKKADDTFSNIQLPFYTLSDYSELIEVAENEGKISSEDIQTLVEWRDNLA</sequence>
<dbReference type="EC" id="2.4.2.10" evidence="1"/>
<dbReference type="EMBL" id="BA000033">
    <property type="protein sequence ID" value="BAB94953.1"/>
    <property type="molecule type" value="Genomic_DNA"/>
</dbReference>
<dbReference type="RefSeq" id="WP_001040246.1">
    <property type="nucleotide sequence ID" value="NC_003923.1"/>
</dbReference>
<dbReference type="SMR" id="Q8NX25"/>
<dbReference type="KEGG" id="sam:MW1088"/>
<dbReference type="HOGENOM" id="CLU_074878_1_1_9"/>
<dbReference type="UniPathway" id="UPA00070">
    <property type="reaction ID" value="UER00119"/>
</dbReference>
<dbReference type="GO" id="GO:0000287">
    <property type="term" value="F:magnesium ion binding"/>
    <property type="evidence" value="ECO:0007669"/>
    <property type="project" value="UniProtKB-UniRule"/>
</dbReference>
<dbReference type="GO" id="GO:0004588">
    <property type="term" value="F:orotate phosphoribosyltransferase activity"/>
    <property type="evidence" value="ECO:0007669"/>
    <property type="project" value="UniProtKB-UniRule"/>
</dbReference>
<dbReference type="GO" id="GO:0044205">
    <property type="term" value="P:'de novo' UMP biosynthetic process"/>
    <property type="evidence" value="ECO:0007669"/>
    <property type="project" value="UniProtKB-UniRule"/>
</dbReference>
<dbReference type="GO" id="GO:0019856">
    <property type="term" value="P:pyrimidine nucleobase biosynthetic process"/>
    <property type="evidence" value="ECO:0007669"/>
    <property type="project" value="TreeGrafter"/>
</dbReference>
<dbReference type="CDD" id="cd06223">
    <property type="entry name" value="PRTases_typeI"/>
    <property type="match status" value="1"/>
</dbReference>
<dbReference type="Gene3D" id="3.40.50.2020">
    <property type="match status" value="1"/>
</dbReference>
<dbReference type="HAMAP" id="MF_01208">
    <property type="entry name" value="PyrE"/>
    <property type="match status" value="1"/>
</dbReference>
<dbReference type="InterPro" id="IPR023031">
    <property type="entry name" value="OPRT"/>
</dbReference>
<dbReference type="InterPro" id="IPR004467">
    <property type="entry name" value="Or_phspho_trans_dom"/>
</dbReference>
<dbReference type="InterPro" id="IPR000836">
    <property type="entry name" value="PRibTrfase_dom"/>
</dbReference>
<dbReference type="InterPro" id="IPR029057">
    <property type="entry name" value="PRTase-like"/>
</dbReference>
<dbReference type="NCBIfam" id="TIGR00336">
    <property type="entry name" value="pyrE"/>
    <property type="match status" value="1"/>
</dbReference>
<dbReference type="PANTHER" id="PTHR19278">
    <property type="entry name" value="OROTATE PHOSPHORIBOSYLTRANSFERASE"/>
    <property type="match status" value="1"/>
</dbReference>
<dbReference type="PANTHER" id="PTHR19278:SF9">
    <property type="entry name" value="URIDINE 5'-MONOPHOSPHATE SYNTHASE"/>
    <property type="match status" value="1"/>
</dbReference>
<dbReference type="Pfam" id="PF00156">
    <property type="entry name" value="Pribosyltran"/>
    <property type="match status" value="1"/>
</dbReference>
<dbReference type="SUPFAM" id="SSF53271">
    <property type="entry name" value="PRTase-like"/>
    <property type="match status" value="1"/>
</dbReference>
<dbReference type="PROSITE" id="PS00103">
    <property type="entry name" value="PUR_PYR_PR_TRANSFER"/>
    <property type="match status" value="1"/>
</dbReference>
<protein>
    <recommendedName>
        <fullName evidence="1">Orotate phosphoribosyltransferase</fullName>
        <shortName evidence="1">OPRT</shortName>
        <shortName evidence="1">OPRTase</shortName>
        <ecNumber evidence="1">2.4.2.10</ecNumber>
    </recommendedName>
</protein>
<keyword id="KW-0328">Glycosyltransferase</keyword>
<keyword id="KW-0460">Magnesium</keyword>
<keyword id="KW-0665">Pyrimidine biosynthesis</keyword>
<keyword id="KW-0808">Transferase</keyword>
<proteinExistence type="inferred from homology"/>
<organism>
    <name type="scientific">Staphylococcus aureus (strain MW2)</name>
    <dbReference type="NCBI Taxonomy" id="196620"/>
    <lineage>
        <taxon>Bacteria</taxon>
        <taxon>Bacillati</taxon>
        <taxon>Bacillota</taxon>
        <taxon>Bacilli</taxon>
        <taxon>Bacillales</taxon>
        <taxon>Staphylococcaceae</taxon>
        <taxon>Staphylococcus</taxon>
    </lineage>
</organism>
<comment type="function">
    <text evidence="1">Catalyzes the transfer of a ribosyl phosphate group from 5-phosphoribose 1-diphosphate to orotate, leading to the formation of orotidine monophosphate (OMP).</text>
</comment>
<comment type="catalytic activity">
    <reaction evidence="1">
        <text>orotidine 5'-phosphate + diphosphate = orotate + 5-phospho-alpha-D-ribose 1-diphosphate</text>
        <dbReference type="Rhea" id="RHEA:10380"/>
        <dbReference type="ChEBI" id="CHEBI:30839"/>
        <dbReference type="ChEBI" id="CHEBI:33019"/>
        <dbReference type="ChEBI" id="CHEBI:57538"/>
        <dbReference type="ChEBI" id="CHEBI:58017"/>
        <dbReference type="EC" id="2.4.2.10"/>
    </reaction>
</comment>
<comment type="cofactor">
    <cofactor evidence="1">
        <name>Mg(2+)</name>
        <dbReference type="ChEBI" id="CHEBI:18420"/>
    </cofactor>
</comment>
<comment type="pathway">
    <text evidence="1">Pyrimidine metabolism; UMP biosynthesis via de novo pathway; UMP from orotate: step 1/2.</text>
</comment>
<comment type="subunit">
    <text evidence="1">Homodimer.</text>
</comment>
<comment type="similarity">
    <text evidence="1">Belongs to the purine/pyrimidine phosphoribosyltransferase family. PyrE subfamily.</text>
</comment>
<evidence type="ECO:0000255" key="1">
    <source>
        <dbReference type="HAMAP-Rule" id="MF_01208"/>
    </source>
</evidence>
<accession>Q8NX25</accession>